<accession>O80796</accession>
<name>VIPP1_ARATH</name>
<feature type="transit peptide" description="Chloroplast" evidence="1">
    <location>
        <begin position="1"/>
        <end position="64"/>
    </location>
</feature>
<feature type="chain" id="PRO_0000029848" description="Membrane-associated protein VIPP1, chloroplastic">
    <location>
        <begin position="65"/>
        <end position="330"/>
    </location>
</feature>
<feature type="region of interest" description="Disordered" evidence="2">
    <location>
        <begin position="287"/>
        <end position="312"/>
    </location>
</feature>
<feature type="coiled-coil region" evidence="1">
    <location>
        <begin position="124"/>
        <end position="259"/>
    </location>
</feature>
<feature type="coiled-coil region" evidence="1">
    <location>
        <begin position="312"/>
        <end position="329"/>
    </location>
</feature>
<dbReference type="EMBL" id="AC004512">
    <property type="protein sequence ID" value="AAC27135.1"/>
    <property type="molecule type" value="Genomic_DNA"/>
</dbReference>
<dbReference type="EMBL" id="CP002684">
    <property type="protein sequence ID" value="AEE34349.1"/>
    <property type="molecule type" value="Genomic_DNA"/>
</dbReference>
<dbReference type="EMBL" id="AY045845">
    <property type="protein sequence ID" value="AAK76519.1"/>
    <property type="molecule type" value="mRNA"/>
</dbReference>
<dbReference type="EMBL" id="AY117153">
    <property type="protein sequence ID" value="AAM51228.1"/>
    <property type="molecule type" value="mRNA"/>
</dbReference>
<dbReference type="PIR" id="T02347">
    <property type="entry name" value="T02347"/>
</dbReference>
<dbReference type="SMR" id="O80796"/>
<dbReference type="BioGRID" id="28054">
    <property type="interactions" value="6"/>
</dbReference>
<dbReference type="FunCoup" id="O80796">
    <property type="interactions" value="1301"/>
</dbReference>
<dbReference type="IntAct" id="O80796">
    <property type="interactions" value="1"/>
</dbReference>
<dbReference type="STRING" id="3702.O80796"/>
<dbReference type="iPTMnet" id="O80796"/>
<dbReference type="MetOSite" id="O80796"/>
<dbReference type="PaxDb" id="3702-AT1G65260.1"/>
<dbReference type="ProteomicsDB" id="232986"/>
<dbReference type="EnsemblPlants" id="AT1G65260.1">
    <property type="protein sequence ID" value="AT1G65260.1"/>
    <property type="gene ID" value="AT1G65260"/>
</dbReference>
<dbReference type="GeneID" id="842833"/>
<dbReference type="Gramene" id="AT1G65260.1">
    <property type="protein sequence ID" value="AT1G65260.1"/>
    <property type="gene ID" value="AT1G65260"/>
</dbReference>
<dbReference type="KEGG" id="ath:AT1G65260"/>
<dbReference type="Araport" id="AT1G65260"/>
<dbReference type="TAIR" id="AT1G65260">
    <property type="gene designation" value="PTAC4"/>
</dbReference>
<dbReference type="eggNOG" id="ENOG502QSHK">
    <property type="taxonomic scope" value="Eukaryota"/>
</dbReference>
<dbReference type="HOGENOM" id="CLU_056466_0_0_1"/>
<dbReference type="InParanoid" id="O80796"/>
<dbReference type="PhylomeDB" id="O80796"/>
<dbReference type="PRO" id="PR:O80796"/>
<dbReference type="Proteomes" id="UP000006548">
    <property type="component" value="Chromosome 1"/>
</dbReference>
<dbReference type="ExpressionAtlas" id="O80796">
    <property type="expression patterns" value="baseline and differential"/>
</dbReference>
<dbReference type="GO" id="GO:0009507">
    <property type="term" value="C:chloroplast"/>
    <property type="evidence" value="ECO:0007005"/>
    <property type="project" value="TAIR"/>
</dbReference>
<dbReference type="GO" id="GO:0009941">
    <property type="term" value="C:chloroplast envelope"/>
    <property type="evidence" value="ECO:0007005"/>
    <property type="project" value="TAIR"/>
</dbReference>
<dbReference type="GO" id="GO:0009706">
    <property type="term" value="C:chloroplast inner membrane"/>
    <property type="evidence" value="ECO:0007669"/>
    <property type="project" value="UniProtKB-SubCell"/>
</dbReference>
<dbReference type="GO" id="GO:0042644">
    <property type="term" value="C:chloroplast nucleoid"/>
    <property type="evidence" value="ECO:0007005"/>
    <property type="project" value="TAIR"/>
</dbReference>
<dbReference type="GO" id="GO:0009570">
    <property type="term" value="C:chloroplast stroma"/>
    <property type="evidence" value="ECO:0007005"/>
    <property type="project" value="TAIR"/>
</dbReference>
<dbReference type="GO" id="GO:0009534">
    <property type="term" value="C:chloroplast thylakoid"/>
    <property type="evidence" value="ECO:0007005"/>
    <property type="project" value="TAIR"/>
</dbReference>
<dbReference type="GO" id="GO:0009535">
    <property type="term" value="C:chloroplast thylakoid membrane"/>
    <property type="evidence" value="ECO:0007005"/>
    <property type="project" value="TAIR"/>
</dbReference>
<dbReference type="GO" id="GO:0005634">
    <property type="term" value="C:nucleus"/>
    <property type="evidence" value="ECO:0007005"/>
    <property type="project" value="TAIR"/>
</dbReference>
<dbReference type="GO" id="GO:0010027">
    <property type="term" value="P:thylakoid membrane organization"/>
    <property type="evidence" value="ECO:0000315"/>
    <property type="project" value="TAIR"/>
</dbReference>
<dbReference type="GO" id="GO:0016050">
    <property type="term" value="P:vesicle organization"/>
    <property type="evidence" value="ECO:0000315"/>
    <property type="project" value="TAIR"/>
</dbReference>
<dbReference type="InterPro" id="IPR007157">
    <property type="entry name" value="PspA_VIPP1"/>
</dbReference>
<dbReference type="PANTHER" id="PTHR31088">
    <property type="entry name" value="MEMBRANE-ASSOCIATED PROTEIN VIPP1, CHLOROPLASTIC"/>
    <property type="match status" value="1"/>
</dbReference>
<dbReference type="PANTHER" id="PTHR31088:SF12">
    <property type="entry name" value="MEMBRANE-ASSOCIATED PROTEIN VIPP1, CHLOROPLASTIC"/>
    <property type="match status" value="1"/>
</dbReference>
<dbReference type="Pfam" id="PF04012">
    <property type="entry name" value="PspA_IM30"/>
    <property type="match status" value="1"/>
</dbReference>
<organism>
    <name type="scientific">Arabidopsis thaliana</name>
    <name type="common">Mouse-ear cress</name>
    <dbReference type="NCBI Taxonomy" id="3702"/>
    <lineage>
        <taxon>Eukaryota</taxon>
        <taxon>Viridiplantae</taxon>
        <taxon>Streptophyta</taxon>
        <taxon>Embryophyta</taxon>
        <taxon>Tracheophyta</taxon>
        <taxon>Spermatophyta</taxon>
        <taxon>Magnoliopsida</taxon>
        <taxon>eudicotyledons</taxon>
        <taxon>Gunneridae</taxon>
        <taxon>Pentapetalae</taxon>
        <taxon>rosids</taxon>
        <taxon>malvids</taxon>
        <taxon>Brassicales</taxon>
        <taxon>Brassicaceae</taxon>
        <taxon>Camelineae</taxon>
        <taxon>Arabidopsis</taxon>
    </lineage>
</organism>
<sequence>MALKASPVTGLFPPLRPTASSSPSTSSNRPCSLRILPLRTSFFGNSSGALRVNVLRLACDNRLRCNGHGATMNLFERFSRVVKSYANALISSFEDPEKILEQTVIEMNSDLTKMRQATAQVLASQKQLQNKYKAAQQSSDDWYKRAQLALAKGDEDLAREALKRRKSFADNATALKTQLDQQKGVVDNLVSNTRLLESKIQEAKAKKDTLLARARTAKTATKVQEMIGTVNTSGALSAFEKMEEKVMAMESEADALTQIGTDELEGKFQMLETSSVDDDLADLKKELSGSSKKGELPPGRSTVAASTRYPFKDSEIENELNELRRKANDF</sequence>
<protein>
    <recommendedName>
        <fullName>Membrane-associated protein VIPP1, chloroplastic</fullName>
    </recommendedName>
    <alternativeName>
        <fullName evidence="5">Protein VESICLE-INDUCING PROTEIN IN PLASTIDS 1</fullName>
    </alternativeName>
</protein>
<gene>
    <name evidence="6" type="primary">VIPP1</name>
    <name type="ordered locus">At1g65260</name>
    <name type="ORF">T8F5.2</name>
</gene>
<keyword id="KW-0150">Chloroplast</keyword>
<keyword id="KW-0175">Coiled coil</keyword>
<keyword id="KW-0472">Membrane</keyword>
<keyword id="KW-0934">Plastid</keyword>
<keyword id="KW-1001">Plastid inner membrane</keyword>
<keyword id="KW-1185">Reference proteome</keyword>
<keyword id="KW-0793">Thylakoid</keyword>
<keyword id="KW-0809">Transit peptide</keyword>
<reference key="1">
    <citation type="journal article" date="2000" name="Nature">
        <title>Sequence and analysis of chromosome 1 of the plant Arabidopsis thaliana.</title>
        <authorList>
            <person name="Theologis A."/>
            <person name="Ecker J.R."/>
            <person name="Palm C.J."/>
            <person name="Federspiel N.A."/>
            <person name="Kaul S."/>
            <person name="White O."/>
            <person name="Alonso J."/>
            <person name="Altafi H."/>
            <person name="Araujo R."/>
            <person name="Bowman C.L."/>
            <person name="Brooks S.Y."/>
            <person name="Buehler E."/>
            <person name="Chan A."/>
            <person name="Chao Q."/>
            <person name="Chen H."/>
            <person name="Cheuk R.F."/>
            <person name="Chin C.W."/>
            <person name="Chung M.K."/>
            <person name="Conn L."/>
            <person name="Conway A.B."/>
            <person name="Conway A.R."/>
            <person name="Creasy T.H."/>
            <person name="Dewar K."/>
            <person name="Dunn P."/>
            <person name="Etgu P."/>
            <person name="Feldblyum T.V."/>
            <person name="Feng J.-D."/>
            <person name="Fong B."/>
            <person name="Fujii C.Y."/>
            <person name="Gill J.E."/>
            <person name="Goldsmith A.D."/>
            <person name="Haas B."/>
            <person name="Hansen N.F."/>
            <person name="Hughes B."/>
            <person name="Huizar L."/>
            <person name="Hunter J.L."/>
            <person name="Jenkins J."/>
            <person name="Johnson-Hopson C."/>
            <person name="Khan S."/>
            <person name="Khaykin E."/>
            <person name="Kim C.J."/>
            <person name="Koo H.L."/>
            <person name="Kremenetskaia I."/>
            <person name="Kurtz D.B."/>
            <person name="Kwan A."/>
            <person name="Lam B."/>
            <person name="Langin-Hooper S."/>
            <person name="Lee A."/>
            <person name="Lee J.M."/>
            <person name="Lenz C.A."/>
            <person name="Li J.H."/>
            <person name="Li Y.-P."/>
            <person name="Lin X."/>
            <person name="Liu S.X."/>
            <person name="Liu Z.A."/>
            <person name="Luros J.S."/>
            <person name="Maiti R."/>
            <person name="Marziali A."/>
            <person name="Militscher J."/>
            <person name="Miranda M."/>
            <person name="Nguyen M."/>
            <person name="Nierman W.C."/>
            <person name="Osborne B.I."/>
            <person name="Pai G."/>
            <person name="Peterson J."/>
            <person name="Pham P.K."/>
            <person name="Rizzo M."/>
            <person name="Rooney T."/>
            <person name="Rowley D."/>
            <person name="Sakano H."/>
            <person name="Salzberg S.L."/>
            <person name="Schwartz J.R."/>
            <person name="Shinn P."/>
            <person name="Southwick A.M."/>
            <person name="Sun H."/>
            <person name="Tallon L.J."/>
            <person name="Tambunga G."/>
            <person name="Toriumi M.J."/>
            <person name="Town C.D."/>
            <person name="Utterback T."/>
            <person name="Van Aken S."/>
            <person name="Vaysberg M."/>
            <person name="Vysotskaia V.S."/>
            <person name="Walker M."/>
            <person name="Wu D."/>
            <person name="Yu G."/>
            <person name="Fraser C.M."/>
            <person name="Venter J.C."/>
            <person name="Davis R.W."/>
        </authorList>
    </citation>
    <scope>NUCLEOTIDE SEQUENCE [LARGE SCALE GENOMIC DNA]</scope>
    <source>
        <strain>cv. Columbia</strain>
    </source>
</reference>
<reference key="2">
    <citation type="journal article" date="2017" name="Plant J.">
        <title>Araport11: a complete reannotation of the Arabidopsis thaliana reference genome.</title>
        <authorList>
            <person name="Cheng C.Y."/>
            <person name="Krishnakumar V."/>
            <person name="Chan A.P."/>
            <person name="Thibaud-Nissen F."/>
            <person name="Schobel S."/>
            <person name="Town C.D."/>
        </authorList>
    </citation>
    <scope>GENOME REANNOTATION</scope>
    <source>
        <strain>cv. Columbia</strain>
    </source>
</reference>
<reference key="3">
    <citation type="journal article" date="2003" name="Science">
        <title>Empirical analysis of transcriptional activity in the Arabidopsis genome.</title>
        <authorList>
            <person name="Yamada K."/>
            <person name="Lim J."/>
            <person name="Dale J.M."/>
            <person name="Chen H."/>
            <person name="Shinn P."/>
            <person name="Palm C.J."/>
            <person name="Southwick A.M."/>
            <person name="Wu H.C."/>
            <person name="Kim C.J."/>
            <person name="Nguyen M."/>
            <person name="Pham P.K."/>
            <person name="Cheuk R.F."/>
            <person name="Karlin-Newmann G."/>
            <person name="Liu S.X."/>
            <person name="Lam B."/>
            <person name="Sakano H."/>
            <person name="Wu T."/>
            <person name="Yu G."/>
            <person name="Miranda M."/>
            <person name="Quach H.L."/>
            <person name="Tripp M."/>
            <person name="Chang C.H."/>
            <person name="Lee J.M."/>
            <person name="Toriumi M.J."/>
            <person name="Chan M.M."/>
            <person name="Tang C.C."/>
            <person name="Onodera C.S."/>
            <person name="Deng J.M."/>
            <person name="Akiyama K."/>
            <person name="Ansari Y."/>
            <person name="Arakawa T."/>
            <person name="Banh J."/>
            <person name="Banno F."/>
            <person name="Bowser L."/>
            <person name="Brooks S.Y."/>
            <person name="Carninci P."/>
            <person name="Chao Q."/>
            <person name="Choy N."/>
            <person name="Enju A."/>
            <person name="Goldsmith A.D."/>
            <person name="Gurjal M."/>
            <person name="Hansen N.F."/>
            <person name="Hayashizaki Y."/>
            <person name="Johnson-Hopson C."/>
            <person name="Hsuan V.W."/>
            <person name="Iida K."/>
            <person name="Karnes M."/>
            <person name="Khan S."/>
            <person name="Koesema E."/>
            <person name="Ishida J."/>
            <person name="Jiang P.X."/>
            <person name="Jones T."/>
            <person name="Kawai J."/>
            <person name="Kamiya A."/>
            <person name="Meyers C."/>
            <person name="Nakajima M."/>
            <person name="Narusaka M."/>
            <person name="Seki M."/>
            <person name="Sakurai T."/>
            <person name="Satou M."/>
            <person name="Tamse R."/>
            <person name="Vaysberg M."/>
            <person name="Wallender E.K."/>
            <person name="Wong C."/>
            <person name="Yamamura Y."/>
            <person name="Yuan S."/>
            <person name="Shinozaki K."/>
            <person name="Davis R.W."/>
            <person name="Theologis A."/>
            <person name="Ecker J.R."/>
        </authorList>
    </citation>
    <scope>NUCLEOTIDE SEQUENCE [LARGE SCALE MRNA]</scope>
    <source>
        <strain>cv. Columbia</strain>
    </source>
</reference>
<reference key="4">
    <citation type="journal article" date="2001" name="Proc. Natl. Acad. Sci. U.S.A.">
        <title>VIPP1, a nuclear gene of Arabidopsis thaliana essential for thylakoid membrane formation.</title>
        <authorList>
            <person name="Kroll D."/>
            <person name="Meierhoff K."/>
            <person name="Bechtold N."/>
            <person name="Kinoshita M."/>
            <person name="Westphal S."/>
            <person name="Vothknecht U.C."/>
            <person name="Soll J."/>
            <person name="Westhoff P."/>
        </authorList>
    </citation>
    <scope>FUNCTION</scope>
    <scope>DISRUPTION PHENOTYPE</scope>
    <scope>SUBCELLULAR LOCATION</scope>
    <source>
        <strain>cv. Columbia</strain>
    </source>
</reference>
<reference key="5">
    <citation type="journal article" date="2007" name="Plant Physiol. Biochem.">
        <title>Vipp1 is required for basic thylakoid membrane formation but not for the assembly of thylakoid protein complexes.</title>
        <authorList>
            <person name="Aseeva E."/>
            <person name="Ossenbuehl F."/>
            <person name="Sippel C."/>
            <person name="Cho W.K."/>
            <person name="Stein B."/>
            <person name="Eichacker L.A."/>
            <person name="Meurer J."/>
            <person name="Wanner G."/>
            <person name="Westhoff P."/>
            <person name="Soll J."/>
            <person name="Vothknecht U.C."/>
        </authorList>
    </citation>
    <scope>FUNCTION</scope>
    <scope>SUBUNIT</scope>
    <scope>SUBCELLULAR LOCATION</scope>
    <scope>DISRUPTION PHENOTYPE</scope>
    <source>
        <strain>cv. Columbia</strain>
    </source>
</reference>
<evidence type="ECO:0000255" key="1"/>
<evidence type="ECO:0000256" key="2">
    <source>
        <dbReference type="SAM" id="MobiDB-lite"/>
    </source>
</evidence>
<evidence type="ECO:0000269" key="3">
    <source>
    </source>
</evidence>
<evidence type="ECO:0000269" key="4">
    <source>
    </source>
</evidence>
<evidence type="ECO:0000303" key="5">
    <source>
    </source>
</evidence>
<evidence type="ECO:0000303" key="6">
    <source>
    </source>
</evidence>
<evidence type="ECO:0000305" key="7"/>
<proteinExistence type="evidence at protein level"/>
<comment type="function">
    <text evidence="3 4">Required for plastid vesicle formation and thylakoid membrane biogenesis, but not for functional assembly of thylakoid protein complexes.</text>
</comment>
<comment type="subunit">
    <text evidence="4">Homomultimer. Complex formation involves interaction via the central alpha-helical domain (71-286).</text>
</comment>
<comment type="subcellular location">
    <subcellularLocation>
        <location evidence="3">Plastid</location>
        <location evidence="3">Chloroplast inner membrane</location>
        <topology evidence="3">Peripheral membrane protein</topology>
    </subcellularLocation>
    <subcellularLocation>
        <location evidence="3">Plastid</location>
        <location evidence="3">Chloroplast thylakoid membrane</location>
        <topology evidence="3">Peripheral membrane protein</topology>
    </subcellularLocation>
</comment>
<comment type="disruption phenotype">
    <text evidence="3 4">Pale green and unable to grow photoautotrophically on soil (PubMed:11274447, PubMed:17346982). Decreased thylakoid content (PubMed:17346982).</text>
</comment>
<comment type="similarity">
    <text evidence="7">Belongs to the PspA/Vipp/IM30 family.</text>
</comment>